<reference key="1">
    <citation type="journal article" date="2000" name="Nature">
        <title>Sequence and analysis of chromosome 5 of the plant Arabidopsis thaliana.</title>
        <authorList>
            <person name="Tabata S."/>
            <person name="Kaneko T."/>
            <person name="Nakamura Y."/>
            <person name="Kotani H."/>
            <person name="Kato T."/>
            <person name="Asamizu E."/>
            <person name="Miyajima N."/>
            <person name="Sasamoto S."/>
            <person name="Kimura T."/>
            <person name="Hosouchi T."/>
            <person name="Kawashima K."/>
            <person name="Kohara M."/>
            <person name="Matsumoto M."/>
            <person name="Matsuno A."/>
            <person name="Muraki A."/>
            <person name="Nakayama S."/>
            <person name="Nakazaki N."/>
            <person name="Naruo K."/>
            <person name="Okumura S."/>
            <person name="Shinpo S."/>
            <person name="Takeuchi C."/>
            <person name="Wada T."/>
            <person name="Watanabe A."/>
            <person name="Yamada M."/>
            <person name="Yasuda M."/>
            <person name="Sato S."/>
            <person name="de la Bastide M."/>
            <person name="Huang E."/>
            <person name="Spiegel L."/>
            <person name="Gnoj L."/>
            <person name="O'Shaughnessy A."/>
            <person name="Preston R."/>
            <person name="Habermann K."/>
            <person name="Murray J."/>
            <person name="Johnson D."/>
            <person name="Rohlfing T."/>
            <person name="Nelson J."/>
            <person name="Stoneking T."/>
            <person name="Pepin K."/>
            <person name="Spieth J."/>
            <person name="Sekhon M."/>
            <person name="Armstrong J."/>
            <person name="Becker M."/>
            <person name="Belter E."/>
            <person name="Cordum H."/>
            <person name="Cordes M."/>
            <person name="Courtney L."/>
            <person name="Courtney W."/>
            <person name="Dante M."/>
            <person name="Du H."/>
            <person name="Edwards J."/>
            <person name="Fryman J."/>
            <person name="Haakensen B."/>
            <person name="Lamar E."/>
            <person name="Latreille P."/>
            <person name="Leonard S."/>
            <person name="Meyer R."/>
            <person name="Mulvaney E."/>
            <person name="Ozersky P."/>
            <person name="Riley A."/>
            <person name="Strowmatt C."/>
            <person name="Wagner-McPherson C."/>
            <person name="Wollam A."/>
            <person name="Yoakum M."/>
            <person name="Bell M."/>
            <person name="Dedhia N."/>
            <person name="Parnell L."/>
            <person name="Shah R."/>
            <person name="Rodriguez M."/>
            <person name="Hoon See L."/>
            <person name="Vil D."/>
            <person name="Baker J."/>
            <person name="Kirchoff K."/>
            <person name="Toth K."/>
            <person name="King L."/>
            <person name="Bahret A."/>
            <person name="Miller B."/>
            <person name="Marra M.A."/>
            <person name="Martienssen R."/>
            <person name="McCombie W.R."/>
            <person name="Wilson R.K."/>
            <person name="Murphy G."/>
            <person name="Bancroft I."/>
            <person name="Volckaert G."/>
            <person name="Wambutt R."/>
            <person name="Duesterhoeft A."/>
            <person name="Stiekema W."/>
            <person name="Pohl T."/>
            <person name="Entian K.-D."/>
            <person name="Terryn N."/>
            <person name="Hartley N."/>
            <person name="Bent E."/>
            <person name="Johnson S."/>
            <person name="Langham S.-A."/>
            <person name="McCullagh B."/>
            <person name="Robben J."/>
            <person name="Grymonprez B."/>
            <person name="Zimmermann W."/>
            <person name="Ramsperger U."/>
            <person name="Wedler H."/>
            <person name="Balke K."/>
            <person name="Wedler E."/>
            <person name="Peters S."/>
            <person name="van Staveren M."/>
            <person name="Dirkse W."/>
            <person name="Mooijman P."/>
            <person name="Klein Lankhorst R."/>
            <person name="Weitzenegger T."/>
            <person name="Bothe G."/>
            <person name="Rose M."/>
            <person name="Hauf J."/>
            <person name="Berneiser S."/>
            <person name="Hempel S."/>
            <person name="Feldpausch M."/>
            <person name="Lamberth S."/>
            <person name="Villarroel R."/>
            <person name="Gielen J."/>
            <person name="Ardiles W."/>
            <person name="Bents O."/>
            <person name="Lemcke K."/>
            <person name="Kolesov G."/>
            <person name="Mayer K.F.X."/>
            <person name="Rudd S."/>
            <person name="Schoof H."/>
            <person name="Schueller C."/>
            <person name="Zaccaria P."/>
            <person name="Mewes H.-W."/>
            <person name="Bevan M."/>
            <person name="Fransz P.F."/>
        </authorList>
    </citation>
    <scope>NUCLEOTIDE SEQUENCE [LARGE SCALE GENOMIC DNA]</scope>
    <source>
        <strain>cv. Columbia</strain>
    </source>
</reference>
<reference key="2">
    <citation type="journal article" date="2017" name="Plant J.">
        <title>Araport11: a complete reannotation of the Arabidopsis thaliana reference genome.</title>
        <authorList>
            <person name="Cheng C.Y."/>
            <person name="Krishnakumar V."/>
            <person name="Chan A.P."/>
            <person name="Thibaud-Nissen F."/>
            <person name="Schobel S."/>
            <person name="Town C.D."/>
        </authorList>
    </citation>
    <scope>GENOME REANNOTATION</scope>
    <source>
        <strain>cv. Columbia</strain>
    </source>
</reference>
<reference key="3">
    <citation type="journal article" date="2003" name="Science">
        <title>Empirical analysis of transcriptional activity in the Arabidopsis genome.</title>
        <authorList>
            <person name="Yamada K."/>
            <person name="Lim J."/>
            <person name="Dale J.M."/>
            <person name="Chen H."/>
            <person name="Shinn P."/>
            <person name="Palm C.J."/>
            <person name="Southwick A.M."/>
            <person name="Wu H.C."/>
            <person name="Kim C.J."/>
            <person name="Nguyen M."/>
            <person name="Pham P.K."/>
            <person name="Cheuk R.F."/>
            <person name="Karlin-Newmann G."/>
            <person name="Liu S.X."/>
            <person name="Lam B."/>
            <person name="Sakano H."/>
            <person name="Wu T."/>
            <person name="Yu G."/>
            <person name="Miranda M."/>
            <person name="Quach H.L."/>
            <person name="Tripp M."/>
            <person name="Chang C.H."/>
            <person name="Lee J.M."/>
            <person name="Toriumi M.J."/>
            <person name="Chan M.M."/>
            <person name="Tang C.C."/>
            <person name="Onodera C.S."/>
            <person name="Deng J.M."/>
            <person name="Akiyama K."/>
            <person name="Ansari Y."/>
            <person name="Arakawa T."/>
            <person name="Banh J."/>
            <person name="Banno F."/>
            <person name="Bowser L."/>
            <person name="Brooks S.Y."/>
            <person name="Carninci P."/>
            <person name="Chao Q."/>
            <person name="Choy N."/>
            <person name="Enju A."/>
            <person name="Goldsmith A.D."/>
            <person name="Gurjal M."/>
            <person name="Hansen N.F."/>
            <person name="Hayashizaki Y."/>
            <person name="Johnson-Hopson C."/>
            <person name="Hsuan V.W."/>
            <person name="Iida K."/>
            <person name="Karnes M."/>
            <person name="Khan S."/>
            <person name="Koesema E."/>
            <person name="Ishida J."/>
            <person name="Jiang P.X."/>
            <person name="Jones T."/>
            <person name="Kawai J."/>
            <person name="Kamiya A."/>
            <person name="Meyers C."/>
            <person name="Nakajima M."/>
            <person name="Narusaka M."/>
            <person name="Seki M."/>
            <person name="Sakurai T."/>
            <person name="Satou M."/>
            <person name="Tamse R."/>
            <person name="Vaysberg M."/>
            <person name="Wallender E.K."/>
            <person name="Wong C."/>
            <person name="Yamamura Y."/>
            <person name="Yuan S."/>
            <person name="Shinozaki K."/>
            <person name="Davis R.W."/>
            <person name="Theologis A."/>
            <person name="Ecker J.R."/>
        </authorList>
    </citation>
    <scope>NUCLEOTIDE SEQUENCE [LARGE SCALE MRNA]</scope>
    <source>
        <strain>cv. Columbia</strain>
    </source>
</reference>
<reference key="4">
    <citation type="journal article" date="2006" name="Plant Cell">
        <title>Constitutive expression exposes functional redundancy between the Arabidopsis histone H2A gene HTA1 and other H2A gene family members.</title>
        <authorList>
            <person name="Yi H."/>
            <person name="Sardesai N."/>
            <person name="Fujinuma T."/>
            <person name="Chan C.-W."/>
            <person name="Veena X."/>
            <person name="Gelvin S.B."/>
        </authorList>
    </citation>
    <scope>NOMENCLATURE</scope>
</reference>
<reference key="5">
    <citation type="journal article" date="2007" name="Nature">
        <title>Control of DNA methylation and heterochromatic silencing by histone H2B deubiquitination.</title>
        <authorList>
            <person name="Sridhar V.V."/>
            <person name="Kapoor A."/>
            <person name="Zhang K."/>
            <person name="Zhu J."/>
            <person name="Zhou T."/>
            <person name="Hasegawa P.M."/>
            <person name="Bressan R.A."/>
            <person name="Zhu J.-K."/>
        </authorList>
    </citation>
    <scope>LACK OF UBIQUITINATION</scope>
    <scope>IDENTIFICATION BY MASS SPECTROMETRY</scope>
</reference>
<proteinExistence type="evidence at protein level"/>
<feature type="chain" id="PRO_0000055203" description="Probable histone H2A.5">
    <location>
        <begin position="1"/>
        <end position="150"/>
    </location>
</feature>
<feature type="region of interest" description="Disordered" evidence="3">
    <location>
        <begin position="1"/>
        <end position="28"/>
    </location>
</feature>
<feature type="region of interest" description="Disordered" evidence="3">
    <location>
        <begin position="130"/>
        <end position="150"/>
    </location>
</feature>
<feature type="short sequence motif" description="SPKK motif">
    <location>
        <begin position="146"/>
        <end position="149"/>
    </location>
</feature>
<feature type="compositionally biased region" description="Low complexity" evidence="3">
    <location>
        <begin position="1"/>
        <end position="12"/>
    </location>
</feature>
<feature type="compositionally biased region" description="Polar residues" evidence="3">
    <location>
        <begin position="131"/>
        <end position="150"/>
    </location>
</feature>
<feature type="modified residue" description="Phosphoserine" evidence="2">
    <location>
        <position position="146"/>
    </location>
</feature>
<organism>
    <name type="scientific">Arabidopsis thaliana</name>
    <name type="common">Mouse-ear cress</name>
    <dbReference type="NCBI Taxonomy" id="3702"/>
    <lineage>
        <taxon>Eukaryota</taxon>
        <taxon>Viridiplantae</taxon>
        <taxon>Streptophyta</taxon>
        <taxon>Embryophyta</taxon>
        <taxon>Tracheophyta</taxon>
        <taxon>Spermatophyta</taxon>
        <taxon>Magnoliopsida</taxon>
        <taxon>eudicotyledons</taxon>
        <taxon>Gunneridae</taxon>
        <taxon>Pentapetalae</taxon>
        <taxon>rosids</taxon>
        <taxon>malvids</taxon>
        <taxon>Brassicales</taxon>
        <taxon>Brassicaceae</taxon>
        <taxon>Camelineae</taxon>
        <taxon>Arabidopsis</taxon>
    </lineage>
</organism>
<accession>Q94F49</accession>
<sequence>MESSQATTKPTRGAGGRKGGDRKKSVSKSVKAGLQFPVGRIARYLKKGRYALRYGSGAPVYLAAVLEYLAAEVLELAGNAARDNKKNRINPRHLCLAIRNDEELGRLLHGVTIASGGVLPNINPVLLPKKSTASSSQAEKASATKSPKKA</sequence>
<dbReference type="EMBL" id="AC007478">
    <property type="status" value="NOT_ANNOTATED_CDS"/>
    <property type="molecule type" value="Genomic_DNA"/>
</dbReference>
<dbReference type="EMBL" id="AC069556">
    <property type="status" value="NOT_ANNOTATED_CDS"/>
    <property type="molecule type" value="Genomic_DNA"/>
</dbReference>
<dbReference type="EMBL" id="CP002688">
    <property type="protein sequence ID" value="AED93713.1"/>
    <property type="molecule type" value="Genomic_DNA"/>
</dbReference>
<dbReference type="EMBL" id="AF385711">
    <property type="protein sequence ID" value="AAK60303.1"/>
    <property type="molecule type" value="mRNA"/>
</dbReference>
<dbReference type="EMBL" id="AY078019">
    <property type="protein sequence ID" value="AAL77720.1"/>
    <property type="molecule type" value="mRNA"/>
</dbReference>
<dbReference type="SMR" id="Q94F49"/>
<dbReference type="BioGRID" id="18103">
    <property type="interactions" value="9"/>
</dbReference>
<dbReference type="FunCoup" id="Q94F49">
    <property type="interactions" value="152"/>
</dbReference>
<dbReference type="STRING" id="3702.Q94F49"/>
<dbReference type="iPTMnet" id="Q94F49"/>
<dbReference type="PaxDb" id="3702-AT5G27670.1"/>
<dbReference type="ProteomicsDB" id="247207"/>
<dbReference type="EnsemblPlants" id="AT5G27670.1">
    <property type="protein sequence ID" value="AT5G27670.1"/>
    <property type="gene ID" value="AT5G27670"/>
</dbReference>
<dbReference type="Gramene" id="AT5G27670.1">
    <property type="protein sequence ID" value="AT5G27670.1"/>
    <property type="gene ID" value="AT5G27670"/>
</dbReference>
<dbReference type="KEGG" id="ath:AT5G27670"/>
<dbReference type="Araport" id="AT5G27670"/>
<dbReference type="TAIR" id="AT5G27670">
    <property type="gene designation" value="HTA7"/>
</dbReference>
<dbReference type="eggNOG" id="KOG1756">
    <property type="taxonomic scope" value="Eukaryota"/>
</dbReference>
<dbReference type="HOGENOM" id="CLU_062828_3_1_1"/>
<dbReference type="InParanoid" id="Q94F49"/>
<dbReference type="OMA" id="KSDHRAG"/>
<dbReference type="OrthoDB" id="10253031at2759"/>
<dbReference type="PhylomeDB" id="Q94F49"/>
<dbReference type="CD-CODE" id="4299E36E">
    <property type="entry name" value="Nucleolus"/>
</dbReference>
<dbReference type="PRO" id="PR:Q94F49"/>
<dbReference type="Proteomes" id="UP000006548">
    <property type="component" value="Chromosome 5"/>
</dbReference>
<dbReference type="ExpressionAtlas" id="Q94F49">
    <property type="expression patterns" value="baseline and differential"/>
</dbReference>
<dbReference type="GO" id="GO:0000792">
    <property type="term" value="C:heterochromatin"/>
    <property type="evidence" value="ECO:0000314"/>
    <property type="project" value="TAIR"/>
</dbReference>
<dbReference type="GO" id="GO:0005730">
    <property type="term" value="C:nucleolus"/>
    <property type="evidence" value="ECO:0007005"/>
    <property type="project" value="TAIR"/>
</dbReference>
<dbReference type="GO" id="GO:0000786">
    <property type="term" value="C:nucleosome"/>
    <property type="evidence" value="ECO:0007669"/>
    <property type="project" value="UniProtKB-KW"/>
</dbReference>
<dbReference type="GO" id="GO:0009536">
    <property type="term" value="C:plastid"/>
    <property type="evidence" value="ECO:0007005"/>
    <property type="project" value="TAIR"/>
</dbReference>
<dbReference type="GO" id="GO:0003682">
    <property type="term" value="F:chromatin binding"/>
    <property type="evidence" value="ECO:0000314"/>
    <property type="project" value="TAIR"/>
</dbReference>
<dbReference type="GO" id="GO:0003677">
    <property type="term" value="F:DNA binding"/>
    <property type="evidence" value="ECO:0007669"/>
    <property type="project" value="UniProtKB-KW"/>
</dbReference>
<dbReference type="GO" id="GO:0046982">
    <property type="term" value="F:protein heterodimerization activity"/>
    <property type="evidence" value="ECO:0007669"/>
    <property type="project" value="InterPro"/>
</dbReference>
<dbReference type="GO" id="GO:0030527">
    <property type="term" value="F:structural constituent of chromatin"/>
    <property type="evidence" value="ECO:0007669"/>
    <property type="project" value="InterPro"/>
</dbReference>
<dbReference type="GO" id="GO:0070828">
    <property type="term" value="P:heterochromatin organization"/>
    <property type="evidence" value="ECO:0000316"/>
    <property type="project" value="TAIR"/>
</dbReference>
<dbReference type="CDD" id="cd00074">
    <property type="entry name" value="HFD_H2A"/>
    <property type="match status" value="1"/>
</dbReference>
<dbReference type="FunFam" id="1.10.20.10:FF:000026">
    <property type="entry name" value="Histone H2A"/>
    <property type="match status" value="1"/>
</dbReference>
<dbReference type="Gene3D" id="1.10.20.10">
    <property type="entry name" value="Histone, subunit A"/>
    <property type="match status" value="1"/>
</dbReference>
<dbReference type="InterPro" id="IPR009072">
    <property type="entry name" value="Histone-fold"/>
</dbReference>
<dbReference type="InterPro" id="IPR002119">
    <property type="entry name" value="Histone_H2A"/>
</dbReference>
<dbReference type="InterPro" id="IPR007125">
    <property type="entry name" value="Histone_H2A/H2B/H3"/>
</dbReference>
<dbReference type="InterPro" id="IPR032454">
    <property type="entry name" value="Histone_H2A_C"/>
</dbReference>
<dbReference type="InterPro" id="IPR032458">
    <property type="entry name" value="Histone_H2A_CS"/>
</dbReference>
<dbReference type="PANTHER" id="PTHR23430">
    <property type="entry name" value="HISTONE H2A"/>
    <property type="match status" value="1"/>
</dbReference>
<dbReference type="Pfam" id="PF00125">
    <property type="entry name" value="Histone"/>
    <property type="match status" value="1"/>
</dbReference>
<dbReference type="Pfam" id="PF16211">
    <property type="entry name" value="Histone_H2A_C"/>
    <property type="match status" value="1"/>
</dbReference>
<dbReference type="PRINTS" id="PR00620">
    <property type="entry name" value="HISTONEH2A"/>
</dbReference>
<dbReference type="SMART" id="SM00414">
    <property type="entry name" value="H2A"/>
    <property type="match status" value="1"/>
</dbReference>
<dbReference type="SUPFAM" id="SSF47113">
    <property type="entry name" value="Histone-fold"/>
    <property type="match status" value="1"/>
</dbReference>
<dbReference type="PROSITE" id="PS00046">
    <property type="entry name" value="HISTONE_H2A"/>
    <property type="match status" value="1"/>
</dbReference>
<gene>
    <name type="ordered locus">At5g27670</name>
    <name type="ORF">F15A18.130</name>
</gene>
<protein>
    <recommendedName>
        <fullName>Probable histone H2A.5</fullName>
    </recommendedName>
    <alternativeName>
        <fullName>HTA7</fullName>
    </alternativeName>
</protein>
<comment type="function">
    <text>Core component of nucleosome. Nucleosomes wrap and compact DNA into chromatin, limiting DNA accessibility to the cellular machineries which require DNA as a template. Histones thereby play a central role in transcription regulation, DNA repair, DNA replication and chromosomal stability. DNA accessibility is regulated via a complex set of post-translational modifications of histones, also called histone code, and nucleosome remodeling.</text>
</comment>
<comment type="subunit">
    <text>The nucleosome is a histone octamer containing two molecules each of H2A, H2B, H3 and H4 assembled in one H3-H4 heterotetramer and two H2A-H2B heterodimers. The octamer wraps approximately 147 bp of DNA.</text>
</comment>
<comment type="subcellular location">
    <subcellularLocation>
        <location evidence="1">Nucleus</location>
    </subcellularLocation>
    <subcellularLocation>
        <location evidence="1">Chromosome</location>
    </subcellularLocation>
</comment>
<comment type="domain">
    <text>Contains one SPKK motif which may interact with the minor groove of A/T-rich DNA sites. Phosphorylation of this motif may regulate DNA binding. This motif is reiterated in both termini of histone H1 and in the N-terminus of sea urchin histones H2B, but its presence in the C-terminus seems to be unique to plant H2A.</text>
</comment>
<comment type="PTM">
    <text>Not ubiquitinated.</text>
</comment>
<comment type="similarity">
    <text evidence="4">Belongs to the histone H2A family.</text>
</comment>
<keyword id="KW-0158">Chromosome</keyword>
<keyword id="KW-0238">DNA-binding</keyword>
<keyword id="KW-0544">Nucleosome core</keyword>
<keyword id="KW-0539">Nucleus</keyword>
<keyword id="KW-0597">Phosphoprotein</keyword>
<keyword id="KW-1185">Reference proteome</keyword>
<name>H2A5_ARATH</name>
<evidence type="ECO:0000250" key="1"/>
<evidence type="ECO:0000250" key="2">
    <source>
        <dbReference type="UniProtKB" id="Q9FJE8"/>
    </source>
</evidence>
<evidence type="ECO:0000256" key="3">
    <source>
        <dbReference type="SAM" id="MobiDB-lite"/>
    </source>
</evidence>
<evidence type="ECO:0000305" key="4"/>